<proteinExistence type="evidence at protein level"/>
<organism>
    <name type="scientific">Rattus norvegicus</name>
    <name type="common">Rat</name>
    <dbReference type="NCBI Taxonomy" id="10116"/>
    <lineage>
        <taxon>Eukaryota</taxon>
        <taxon>Metazoa</taxon>
        <taxon>Chordata</taxon>
        <taxon>Craniata</taxon>
        <taxon>Vertebrata</taxon>
        <taxon>Euteleostomi</taxon>
        <taxon>Mammalia</taxon>
        <taxon>Eutheria</taxon>
        <taxon>Euarchontoglires</taxon>
        <taxon>Glires</taxon>
        <taxon>Rodentia</taxon>
        <taxon>Myomorpha</taxon>
        <taxon>Muroidea</taxon>
        <taxon>Muridae</taxon>
        <taxon>Murinae</taxon>
        <taxon>Rattus</taxon>
    </lineage>
</organism>
<keyword id="KW-0903">Direct protein sequencing</keyword>
<keyword id="KW-1185">Reference proteome</keyword>
<dbReference type="PIR" id="A61354">
    <property type="entry name" value="A61354"/>
</dbReference>
<dbReference type="InParanoid" id="P21794"/>
<dbReference type="Proteomes" id="UP000002494">
    <property type="component" value="Unplaced"/>
</dbReference>
<sequence length="19" mass="2113">DVLELTDENFESRVSSDTG</sequence>
<name>HIP70_RAT</name>
<comment type="induction">
    <text>Most prominent protein induced by estrogen in hypothalamus and most prominent protein induced by LH-RH in pituitary.</text>
</comment>
<feature type="chain" id="PRO_0000083987" description="Hormone-induced protein 70 kDa">
    <location>
        <begin position="1"/>
        <end position="19" status="greater than"/>
    </location>
</feature>
<feature type="non-terminal residue">
    <location>
        <position position="19"/>
    </location>
</feature>
<accession>P21794</accession>
<protein>
    <recommendedName>
        <fullName>Hormone-induced protein 70 kDa</fullName>
        <shortName>HIP-70</shortName>
    </recommendedName>
</protein>
<reference key="1">
    <citation type="journal article" date="1990" name="Science">
        <title>HIP-70: a protein induced by estrogen in the brain and LH-RH in the pituitary.</title>
        <authorList>
            <person name="Mobbs C.V."/>
            <person name="Fink G."/>
            <person name="Pfaff D.W."/>
        </authorList>
    </citation>
    <scope>PROTEIN SEQUENCE</scope>
</reference>